<keyword id="KW-0406">Ion transport</keyword>
<keyword id="KW-0520">NAD</keyword>
<keyword id="KW-1185">Reference proteome</keyword>
<keyword id="KW-0915">Sodium</keyword>
<keyword id="KW-0739">Sodium transport</keyword>
<keyword id="KW-1278">Translocase</keyword>
<keyword id="KW-0813">Transport</keyword>
<keyword id="KW-0830">Ubiquinone</keyword>
<proteinExistence type="inferred from homology"/>
<name>NQRA_CHLTR</name>
<feature type="chain" id="PRO_0000214196" description="Na(+)-translocating NADH-quinone reductase subunit A">
    <location>
        <begin position="1"/>
        <end position="465"/>
    </location>
</feature>
<dbReference type="EC" id="7.2.1.1" evidence="1"/>
<dbReference type="EMBL" id="AE001273">
    <property type="protein sequence ID" value="AAC68238.1"/>
    <property type="molecule type" value="Genomic_DNA"/>
</dbReference>
<dbReference type="PIR" id="F71489">
    <property type="entry name" value="F71489"/>
</dbReference>
<dbReference type="RefSeq" id="NP_220151.1">
    <property type="nucleotide sequence ID" value="NC_000117.1"/>
</dbReference>
<dbReference type="RefSeq" id="WP_009872806.1">
    <property type="nucleotide sequence ID" value="NC_000117.1"/>
</dbReference>
<dbReference type="SMR" id="O84639"/>
<dbReference type="STRING" id="272561.CT_634"/>
<dbReference type="EnsemblBacteria" id="AAC68238">
    <property type="protein sequence ID" value="AAC68238"/>
    <property type="gene ID" value="CT_634"/>
</dbReference>
<dbReference type="GeneID" id="884415"/>
<dbReference type="KEGG" id="ctr:CT_634"/>
<dbReference type="PATRIC" id="fig|272561.5.peg.694"/>
<dbReference type="HOGENOM" id="CLU_046656_0_0_0"/>
<dbReference type="InParanoid" id="O84639"/>
<dbReference type="OrthoDB" id="9774536at2"/>
<dbReference type="Proteomes" id="UP000000431">
    <property type="component" value="Chromosome"/>
</dbReference>
<dbReference type="GO" id="GO:0016655">
    <property type="term" value="F:oxidoreductase activity, acting on NAD(P)H, quinone or similar compound as acceptor"/>
    <property type="evidence" value="ECO:0007669"/>
    <property type="project" value="UniProtKB-UniRule"/>
</dbReference>
<dbReference type="GO" id="GO:0006814">
    <property type="term" value="P:sodium ion transport"/>
    <property type="evidence" value="ECO:0007669"/>
    <property type="project" value="UniProtKB-UniRule"/>
</dbReference>
<dbReference type="HAMAP" id="MF_00425">
    <property type="entry name" value="NqrA"/>
    <property type="match status" value="1"/>
</dbReference>
<dbReference type="InterPro" id="IPR008703">
    <property type="entry name" value="NqrA"/>
</dbReference>
<dbReference type="InterPro" id="IPR056148">
    <property type="entry name" value="NQRA_2nd"/>
</dbReference>
<dbReference type="InterPro" id="IPR022615">
    <property type="entry name" value="NqrA_C_domain"/>
</dbReference>
<dbReference type="InterPro" id="IPR056147">
    <property type="entry name" value="NQRA_N"/>
</dbReference>
<dbReference type="NCBIfam" id="TIGR01936">
    <property type="entry name" value="nqrA"/>
    <property type="match status" value="1"/>
</dbReference>
<dbReference type="NCBIfam" id="NF003758">
    <property type="entry name" value="PRK05352.1-1"/>
    <property type="match status" value="1"/>
</dbReference>
<dbReference type="PANTHER" id="PTHR37839">
    <property type="entry name" value="NA(+)-TRANSLOCATING NADH-QUINONE REDUCTASE SUBUNIT A"/>
    <property type="match status" value="1"/>
</dbReference>
<dbReference type="PANTHER" id="PTHR37839:SF1">
    <property type="entry name" value="NA(+)-TRANSLOCATING NADH-QUINONE REDUCTASE SUBUNIT A"/>
    <property type="match status" value="1"/>
</dbReference>
<dbReference type="Pfam" id="PF24836">
    <property type="entry name" value="NQRA_2nd"/>
    <property type="match status" value="1"/>
</dbReference>
<dbReference type="Pfam" id="PF05896">
    <property type="entry name" value="NQRA_N"/>
    <property type="match status" value="1"/>
</dbReference>
<dbReference type="Pfam" id="PF11973">
    <property type="entry name" value="NQRA_SLBB"/>
    <property type="match status" value="1"/>
</dbReference>
<reference key="1">
    <citation type="journal article" date="1998" name="Science">
        <title>Genome sequence of an obligate intracellular pathogen of humans: Chlamydia trachomatis.</title>
        <authorList>
            <person name="Stephens R.S."/>
            <person name="Kalman S."/>
            <person name="Lammel C.J."/>
            <person name="Fan J."/>
            <person name="Marathe R."/>
            <person name="Aravind L."/>
            <person name="Mitchell W.P."/>
            <person name="Olinger L."/>
            <person name="Tatusov R.L."/>
            <person name="Zhao Q."/>
            <person name="Koonin E.V."/>
            <person name="Davis R.W."/>
        </authorList>
    </citation>
    <scope>NUCLEOTIDE SEQUENCE [LARGE SCALE GENOMIC DNA]</scope>
    <source>
        <strain>ATCC VR-885 / DSM 19411 / UW-3/Cx</strain>
    </source>
</reference>
<gene>
    <name evidence="1" type="primary">nqrA</name>
    <name type="synonym">nqr1</name>
    <name type="ordered locus">CT_634</name>
</gene>
<organism>
    <name type="scientific">Chlamydia trachomatis serovar D (strain ATCC VR-885 / DSM 19411 / UW-3/Cx)</name>
    <dbReference type="NCBI Taxonomy" id="272561"/>
    <lineage>
        <taxon>Bacteria</taxon>
        <taxon>Pseudomonadati</taxon>
        <taxon>Chlamydiota</taxon>
        <taxon>Chlamydiia</taxon>
        <taxon>Chlamydiales</taxon>
        <taxon>Chlamydiaceae</taxon>
        <taxon>Chlamydia/Chlamydophila group</taxon>
        <taxon>Chlamydia</taxon>
    </lineage>
</organism>
<evidence type="ECO:0000255" key="1">
    <source>
        <dbReference type="HAMAP-Rule" id="MF_00425"/>
    </source>
</evidence>
<accession>O84639</accession>
<protein>
    <recommendedName>
        <fullName evidence="1">Na(+)-translocating NADH-quinone reductase subunit A</fullName>
        <shortName evidence="1">Na(+)-NQR subunit A</shortName>
        <shortName evidence="1">Na(+)-translocating NQR subunit A</shortName>
        <ecNumber evidence="1">7.2.1.1</ecNumber>
    </recommendedName>
    <alternativeName>
        <fullName evidence="1">NQR complex subunit A</fullName>
    </alternativeName>
    <alternativeName>
        <fullName evidence="1">NQR-1 subunit A</fullName>
    </alternativeName>
</protein>
<comment type="function">
    <text evidence="1">NQR complex catalyzes the reduction of ubiquinone-1 to ubiquinol by two successive reactions, coupled with the transport of Na(+) ions from the cytoplasm to the periplasm. NqrA to NqrE are probably involved in the second step, the conversion of ubisemiquinone to ubiquinol.</text>
</comment>
<comment type="catalytic activity">
    <reaction evidence="1">
        <text>a ubiquinone + n Na(+)(in) + NADH + H(+) = a ubiquinol + n Na(+)(out) + NAD(+)</text>
        <dbReference type="Rhea" id="RHEA:47748"/>
        <dbReference type="Rhea" id="RHEA-COMP:9565"/>
        <dbReference type="Rhea" id="RHEA-COMP:9566"/>
        <dbReference type="ChEBI" id="CHEBI:15378"/>
        <dbReference type="ChEBI" id="CHEBI:16389"/>
        <dbReference type="ChEBI" id="CHEBI:17976"/>
        <dbReference type="ChEBI" id="CHEBI:29101"/>
        <dbReference type="ChEBI" id="CHEBI:57540"/>
        <dbReference type="ChEBI" id="CHEBI:57945"/>
        <dbReference type="EC" id="7.2.1.1"/>
    </reaction>
</comment>
<comment type="subunit">
    <text evidence="1">Composed of six subunits; NqrA, NqrB, NqrC, NqrD, NqrE and NqrF.</text>
</comment>
<comment type="similarity">
    <text evidence="1">Belongs to the NqrA family.</text>
</comment>
<sequence length="465" mass="51757">MKIVVSRGLDLSLKGAPKESGFCGKVDPTYVSVDLRPFAPLPLGVKVTPEDQVTAGSPLAEYKLFSGVFITSPVDGEVVEIRRGNKRALLEIVIKKKPGISQTKFSYDLQSLTQKDLLEVFKKEGLFALFKQRPFDIPALPTQSPRDVFINLADNRPFTPSVEKHLSLFSSKEDGYYIFVVGVQAIAKLFGLKPHIISTDRLTLPTQDLVSIAHLHTIDGPFPSGSPSTHIHHIARIRNERDVVFTISFQEVLSIGHLFLKGFVLGQQIVALAGSALPPSQRKYLITAKGASFSDLLPKDIFSSDEITLISGDPLTGRLCKKEENPCLGMRDHTITLLPNPKTRESFSFLRLGWNKLTVTRTYLSGFFKRKRVFMDMDTNMHGEKRPIIDAEIYERVSAIPVPVALIIKALETQNFEEACRLGLLEVAPEDFALPTFIDPSKTEMFSIVKESLLRYAKENVVTSS</sequence>